<name>KAD5_HUMAN</name>
<sequence length="562" mass="63333">MNTNDAKEYLARREIPQLFESLLNGLMCSKPEDPVEYLESCLQKVKELGGCDKVKWDTFVSQEKKTLPPLNGGQSRRSFLRNVMPENSNFPYRRYDRLPPIHQFSIESDTDLSETAELIEEYEVFDPTRPRPKIILVIGGPGSGKGTQSLKIAERYGFQYISVGELLRKKIHSTSSNRKWSLIAKIITTGELAPQETTITEIKQKLMQIPDEEGIVIDGFPRDVAQALSFEDQICTPDLVVFLACANQRLKERLLKRAEQQGRPDDNVKATQRRLMNFKQNAAPLVKYFQEKGLIMTFDADRDEDEVFYDISMAVDNKLFPNKEAAAGSSDLDPSMILDTGEIIDTGSDYEDQGDDQLNVFGEDTMGGFMEDLRKCKIIFIIGGPGSGKGTQCEKLVEKYGFTHLSTGELLREELASESERSKLIRDIMERGDLVPSGIVLELLKEAMVASLGDTRGFLIDGYPREVKQGEEFGRRIGDPQLVICMDCSADTMTNRLLQRSRSSLPVDDTTKTIAKRLEAYYRASIPVIAYYETKTQLHKINAEGTPEDVFLQLCTAIDSIF</sequence>
<feature type="chain" id="PRO_0000158930" description="Adenylate kinase isoenzyme 5">
    <location>
        <begin position="1"/>
        <end position="562"/>
    </location>
</feature>
<feature type="region of interest" description="Adenylate kinase 1" evidence="12">
    <location>
        <begin position="133"/>
        <end position="316"/>
    </location>
</feature>
<feature type="region of interest" description="NMP 1" evidence="1">
    <location>
        <begin position="162"/>
        <end position="193"/>
    </location>
</feature>
<feature type="region of interest" description="LID 1" evidence="1">
    <location>
        <begin position="256"/>
        <end position="266"/>
    </location>
</feature>
<feature type="region of interest" description="Adenylate kinase 2" evidence="12">
    <location>
        <begin position="377"/>
        <end position="559"/>
    </location>
</feature>
<feature type="region of interest" description="NMP 2" evidence="6">
    <location>
        <begin position="406"/>
        <end position="435"/>
    </location>
</feature>
<feature type="region of interest" description="LID 2" evidence="6">
    <location>
        <begin position="499"/>
        <end position="509"/>
    </location>
</feature>
<feature type="binding site" evidence="1">
    <location>
        <begin position="142"/>
        <end position="147"/>
    </location>
    <ligand>
        <name>ATP</name>
        <dbReference type="ChEBI" id="CHEBI:30616"/>
        <label>1</label>
    </ligand>
</feature>
<feature type="binding site" evidence="1">
    <location>
        <position position="168"/>
    </location>
    <ligand>
        <name>AMP</name>
        <dbReference type="ChEBI" id="CHEBI:456215"/>
        <label>1</label>
    </ligand>
</feature>
<feature type="binding site" evidence="1">
    <location>
        <begin position="191"/>
        <end position="193"/>
    </location>
    <ligand>
        <name>AMP</name>
        <dbReference type="ChEBI" id="CHEBI:456215"/>
        <label>1</label>
    </ligand>
</feature>
<feature type="binding site" evidence="1">
    <location>
        <begin position="219"/>
        <end position="222"/>
    </location>
    <ligand>
        <name>AMP</name>
        <dbReference type="ChEBI" id="CHEBI:456215"/>
        <label>1</label>
    </ligand>
</feature>
<feature type="binding site" evidence="1">
    <location>
        <position position="226"/>
    </location>
    <ligand>
        <name>AMP</name>
        <dbReference type="ChEBI" id="CHEBI:456215"/>
        <label>1</label>
    </ligand>
</feature>
<feature type="binding site" evidence="1">
    <location>
        <position position="257"/>
    </location>
    <ligand>
        <name>ATP</name>
        <dbReference type="ChEBI" id="CHEBI:30616"/>
        <label>1</label>
    </ligand>
</feature>
<feature type="binding site" evidence="1">
    <location>
        <position position="263"/>
    </location>
    <ligand>
        <name>AMP</name>
        <dbReference type="ChEBI" id="CHEBI:456215"/>
        <label>1</label>
    </ligand>
</feature>
<feature type="binding site" evidence="1">
    <location>
        <position position="274"/>
    </location>
    <ligand>
        <name>AMP</name>
        <dbReference type="ChEBI" id="CHEBI:456215"/>
        <label>1</label>
    </ligand>
</feature>
<feature type="binding site" evidence="1">
    <location>
        <begin position="386"/>
        <end position="391"/>
    </location>
    <ligand>
        <name>ATP</name>
        <dbReference type="ChEBI" id="CHEBI:30616"/>
        <label>2</label>
    </ligand>
</feature>
<feature type="binding site" evidence="1">
    <location>
        <position position="407"/>
    </location>
    <ligand>
        <name>AMP</name>
        <dbReference type="ChEBI" id="CHEBI:456215"/>
        <label>2</label>
    </ligand>
</feature>
<feature type="binding site" evidence="1">
    <location>
        <position position="412"/>
    </location>
    <ligand>
        <name>AMP</name>
        <dbReference type="ChEBI" id="CHEBI:456215"/>
        <label>2</label>
    </ligand>
</feature>
<feature type="binding site" evidence="1">
    <location>
        <begin position="433"/>
        <end position="435"/>
    </location>
    <ligand>
        <name>AMP</name>
        <dbReference type="ChEBI" id="CHEBI:456215"/>
        <label>2</label>
    </ligand>
</feature>
<feature type="binding site" evidence="1">
    <location>
        <begin position="462"/>
        <end position="465"/>
    </location>
    <ligand>
        <name>AMP</name>
        <dbReference type="ChEBI" id="CHEBI:456215"/>
        <label>2</label>
    </ligand>
</feature>
<feature type="binding site" evidence="1">
    <location>
        <position position="469"/>
    </location>
    <ligand>
        <name>AMP</name>
        <dbReference type="ChEBI" id="CHEBI:456215"/>
        <label>2</label>
    </ligand>
</feature>
<feature type="binding site" evidence="1">
    <location>
        <position position="500"/>
    </location>
    <ligand>
        <name>ATP</name>
        <dbReference type="ChEBI" id="CHEBI:30616"/>
        <label>2</label>
    </ligand>
</feature>
<feature type="binding site" evidence="1">
    <location>
        <position position="517"/>
    </location>
    <ligand>
        <name>AMP</name>
        <dbReference type="ChEBI" id="CHEBI:456215"/>
        <label>2</label>
    </ligand>
</feature>
<feature type="binding site" evidence="1">
    <location>
        <position position="545"/>
    </location>
    <ligand>
        <name>ATP</name>
        <dbReference type="ChEBI" id="CHEBI:30616"/>
        <label>2</label>
    </ligand>
</feature>
<feature type="splice variant" id="VSP_037878" description="In isoform 2." evidence="7 8 10">
    <location>
        <begin position="1"/>
        <end position="365"/>
    </location>
</feature>
<feature type="splice variant" id="VSP_037879" description="In isoform 3." evidence="8 9">
    <location>
        <begin position="1"/>
        <end position="26"/>
    </location>
</feature>
<feature type="sequence variant" id="VAR_059435" description="In dbSNP:rs2803140.">
    <original>R</original>
    <variation>Q</variation>
    <location>
        <position position="465"/>
    </location>
</feature>
<feature type="sequence conflict" description="In Ref. 5; AAH36666." evidence="11" ref="5">
    <original>L</original>
    <variation>M</variation>
    <location>
        <position position="10"/>
    </location>
</feature>
<feature type="sequence conflict" description="In Ref. 5; AAH36666." evidence="11" ref="5">
    <original>E</original>
    <variation>G</variation>
    <location>
        <position position="86"/>
    </location>
</feature>
<feature type="sequence conflict" description="In Ref. 2; AAO16520 and 5; AAH33896." evidence="11" ref="2 5">
    <original>L</original>
    <variation>P</variation>
    <location>
        <position position="182"/>
    </location>
</feature>
<feature type="sequence conflict" description="In Ref. 2; AAO16520." evidence="11" ref="2">
    <original>P</original>
    <variation>S</variation>
    <location>
        <position position="321"/>
    </location>
</feature>
<feature type="sequence conflict" description="In Ref. 2; AAO16520." evidence="11" ref="2">
    <original>I</original>
    <variation>T</variation>
    <location>
        <position position="343"/>
    </location>
</feature>
<feature type="sequence conflict" description="In Ref. 5; AAH33896." evidence="11" ref="5">
    <original>S</original>
    <variation>Y</variation>
    <location>
        <position position="348"/>
    </location>
</feature>
<feature type="sequence conflict" description="In Ref. 5; AAH33896." evidence="11" ref="5">
    <original>P</original>
    <variation>T</variation>
    <location>
        <position position="385"/>
    </location>
</feature>
<feature type="sequence conflict" description="In Ref. 2; AAP97322 and 5; AAH33896/AAH12467." evidence="11" ref="2 5">
    <location>
        <position position="561"/>
    </location>
</feature>
<feature type="helix" evidence="13">
    <location>
        <begin position="369"/>
        <end position="375"/>
    </location>
</feature>
<feature type="strand" evidence="13">
    <location>
        <begin position="378"/>
        <end position="383"/>
    </location>
</feature>
<feature type="helix" evidence="13">
    <location>
        <begin position="389"/>
        <end position="400"/>
    </location>
</feature>
<feature type="strand" evidence="13">
    <location>
        <begin position="403"/>
        <end position="406"/>
    </location>
</feature>
<feature type="helix" evidence="13">
    <location>
        <begin position="407"/>
        <end position="417"/>
    </location>
</feature>
<feature type="helix" evidence="13">
    <location>
        <begin position="420"/>
        <end position="430"/>
    </location>
</feature>
<feature type="helix" evidence="13">
    <location>
        <begin position="437"/>
        <end position="451"/>
    </location>
</feature>
<feature type="strand" evidence="13">
    <location>
        <begin position="458"/>
        <end position="461"/>
    </location>
</feature>
<feature type="helix" evidence="13">
    <location>
        <begin position="467"/>
        <end position="476"/>
    </location>
</feature>
<feature type="strand" evidence="13">
    <location>
        <begin position="481"/>
        <end position="487"/>
    </location>
</feature>
<feature type="helix" evidence="13">
    <location>
        <begin position="490"/>
        <end position="499"/>
    </location>
</feature>
<feature type="helix" evidence="13">
    <location>
        <begin position="507"/>
        <end position="535"/>
    </location>
</feature>
<feature type="strand" evidence="13">
    <location>
        <begin position="536"/>
        <end position="542"/>
    </location>
</feature>
<feature type="helix" evidence="13">
    <location>
        <begin position="547"/>
        <end position="561"/>
    </location>
</feature>
<protein>
    <recommendedName>
        <fullName>Adenylate kinase isoenzyme 5</fullName>
        <shortName>AK 5</shortName>
        <ecNumber>2.7.4.3</ecNumber>
        <ecNumber>2.7.4.6</ecNumber>
    </recommendedName>
    <alternativeName>
        <fullName>ATP-AMP transphosphorylase 5</fullName>
    </alternativeName>
</protein>
<proteinExistence type="evidence at protein level"/>
<evidence type="ECO:0000250" key="1">
    <source>
        <dbReference type="UniProtKB" id="P00568"/>
    </source>
</evidence>
<evidence type="ECO:0000269" key="2">
    <source>
    </source>
</evidence>
<evidence type="ECO:0000269" key="3">
    <source>
    </source>
</evidence>
<evidence type="ECO:0000269" key="4">
    <source>
    </source>
</evidence>
<evidence type="ECO:0000269" key="5">
    <source>
    </source>
</evidence>
<evidence type="ECO:0000269" key="6">
    <source ref="9"/>
</evidence>
<evidence type="ECO:0000303" key="7">
    <source>
    </source>
</evidence>
<evidence type="ECO:0000303" key="8">
    <source>
    </source>
</evidence>
<evidence type="ECO:0000303" key="9">
    <source ref="2"/>
</evidence>
<evidence type="ECO:0000303" key="10">
    <source ref="4"/>
</evidence>
<evidence type="ECO:0000305" key="11"/>
<evidence type="ECO:0000305" key="12">
    <source>
    </source>
</evidence>
<evidence type="ECO:0007829" key="13">
    <source>
        <dbReference type="PDB" id="2BWJ"/>
    </source>
</evidence>
<comment type="function">
    <text evidence="4 5">Nucleoside monophosphate (NMP) kinase that catalyzes the reversible transfer of the terminal phosphate group between nucleoside triphosphates and monophosphates. Active on AMP and dAMP with ATP as a donor. When GTP is used as phosphate donor, the enzyme phosphorylates AMP, CMP, and to a small extent dCMP. Also displays broad nucleoside diphosphate kinase activity.</text>
</comment>
<comment type="catalytic activity">
    <reaction evidence="4">
        <text>AMP + ATP = 2 ADP</text>
        <dbReference type="Rhea" id="RHEA:12973"/>
        <dbReference type="ChEBI" id="CHEBI:30616"/>
        <dbReference type="ChEBI" id="CHEBI:456215"/>
        <dbReference type="ChEBI" id="CHEBI:456216"/>
        <dbReference type="EC" id="2.7.4.3"/>
    </reaction>
</comment>
<comment type="catalytic activity">
    <reaction evidence="5">
        <text>a 2'-deoxyribonucleoside 5'-diphosphate + ATP = a 2'-deoxyribonucleoside 5'-triphosphate + ADP</text>
        <dbReference type="Rhea" id="RHEA:44640"/>
        <dbReference type="ChEBI" id="CHEBI:30616"/>
        <dbReference type="ChEBI" id="CHEBI:61560"/>
        <dbReference type="ChEBI" id="CHEBI:73316"/>
        <dbReference type="ChEBI" id="CHEBI:456216"/>
        <dbReference type="EC" id="2.7.4.6"/>
    </reaction>
</comment>
<comment type="catalytic activity">
    <reaction evidence="5">
        <text>a ribonucleoside 5'-diphosphate + ATP = a ribonucleoside 5'-triphosphate + ADP</text>
        <dbReference type="Rhea" id="RHEA:18113"/>
        <dbReference type="ChEBI" id="CHEBI:30616"/>
        <dbReference type="ChEBI" id="CHEBI:57930"/>
        <dbReference type="ChEBI" id="CHEBI:61557"/>
        <dbReference type="ChEBI" id="CHEBI:456216"/>
        <dbReference type="EC" id="2.7.4.6"/>
    </reaction>
</comment>
<comment type="subunit">
    <text evidence="1 3">Monomer. Interacts with YWHAZ (PubMed:16959763).</text>
</comment>
<comment type="subcellular location">
    <subcellularLocation>
        <location evidence="4">Cytoplasm</location>
    </subcellularLocation>
</comment>
<comment type="alternative products">
    <event type="alternative splicing"/>
    <isoform>
        <id>Q9Y6K8-1</id>
        <name>1</name>
        <sequence type="displayed"/>
    </isoform>
    <isoform>
        <id>Q9Y6K8-2</id>
        <name>2</name>
        <sequence type="described" ref="VSP_037878"/>
    </isoform>
    <isoform>
        <id>Q9Y6K8-3</id>
        <name>3</name>
        <name>Adenylate kinase 6</name>
        <sequence type="described" ref="VSP_037879"/>
    </isoform>
</comment>
<comment type="tissue specificity">
    <text evidence="2">Brain specific.</text>
</comment>
<comment type="miscellaneous">
    <molecule>Isoform 2</molecule>
    <text evidence="11">It is unsure whether Met-1 or Met-5 is the initiator.</text>
</comment>
<comment type="similarity">
    <text evidence="11">Belongs to the adenylate kinase family.</text>
</comment>
<gene>
    <name type="primary">AK5</name>
</gene>
<dbReference type="EC" id="2.7.4.3"/>
<dbReference type="EC" id="2.7.4.6"/>
<dbReference type="EMBL" id="AF062595">
    <property type="protein sequence ID" value="AAD27956.1"/>
    <property type="molecule type" value="mRNA"/>
</dbReference>
<dbReference type="EMBL" id="AY171600">
    <property type="protein sequence ID" value="AAO16520.2"/>
    <property type="molecule type" value="mRNA"/>
</dbReference>
<dbReference type="EMBL" id="AF445193">
    <property type="protein sequence ID" value="AAP97322.1"/>
    <property type="molecule type" value="mRNA"/>
</dbReference>
<dbReference type="EMBL" id="CR541890">
    <property type="protein sequence ID" value="CAG46688.1"/>
    <property type="molecule type" value="mRNA"/>
</dbReference>
<dbReference type="EMBL" id="BC033896">
    <property type="protein sequence ID" value="AAH33896.1"/>
    <property type="molecule type" value="mRNA"/>
</dbReference>
<dbReference type="EMBL" id="BC036666">
    <property type="protein sequence ID" value="AAH36666.1"/>
    <property type="molecule type" value="mRNA"/>
</dbReference>
<dbReference type="EMBL" id="BC012467">
    <property type="protein sequence ID" value="AAH12467.2"/>
    <property type="molecule type" value="mRNA"/>
</dbReference>
<dbReference type="CCDS" id="CCDS675.1">
    <molecule id="Q9Y6K8-1"/>
</dbReference>
<dbReference type="CCDS" id="CCDS676.1">
    <molecule id="Q9Y6K8-3"/>
</dbReference>
<dbReference type="RefSeq" id="NP_036225.2">
    <molecule id="Q9Y6K8-3"/>
    <property type="nucleotide sequence ID" value="NM_012093.3"/>
</dbReference>
<dbReference type="RefSeq" id="NP_777283.1">
    <molecule id="Q9Y6K8-1"/>
    <property type="nucleotide sequence ID" value="NM_174858.3"/>
</dbReference>
<dbReference type="RefSeq" id="XP_006710635.1">
    <molecule id="Q9Y6K8-3"/>
    <property type="nucleotide sequence ID" value="XM_006710572.4"/>
</dbReference>
<dbReference type="RefSeq" id="XP_016856497.1">
    <molecule id="Q9Y6K8-3"/>
    <property type="nucleotide sequence ID" value="XM_017001008.3"/>
</dbReference>
<dbReference type="RefSeq" id="XP_016856498.1">
    <property type="nucleotide sequence ID" value="XM_017001009.1"/>
</dbReference>
<dbReference type="RefSeq" id="XP_047273677.1">
    <molecule id="Q9Y6K8-3"/>
    <property type="nucleotide sequence ID" value="XM_047417721.1"/>
</dbReference>
<dbReference type="PDB" id="2BWJ">
    <property type="method" value="X-ray"/>
    <property type="resolution" value="2.30 A"/>
    <property type="chains" value="A/B/C/D/E/F=366-562"/>
</dbReference>
<dbReference type="PDBsum" id="2BWJ"/>
<dbReference type="SMR" id="Q9Y6K8"/>
<dbReference type="BioGRID" id="117670">
    <property type="interactions" value="11"/>
</dbReference>
<dbReference type="FunCoup" id="Q9Y6K8">
    <property type="interactions" value="620"/>
</dbReference>
<dbReference type="IntAct" id="Q9Y6K8">
    <property type="interactions" value="9"/>
</dbReference>
<dbReference type="STRING" id="9606.ENSP00000346577"/>
<dbReference type="iPTMnet" id="Q9Y6K8"/>
<dbReference type="PhosphoSitePlus" id="Q9Y6K8"/>
<dbReference type="BioMuta" id="AK5"/>
<dbReference type="DMDM" id="257051028"/>
<dbReference type="jPOST" id="Q9Y6K8"/>
<dbReference type="MassIVE" id="Q9Y6K8"/>
<dbReference type="PaxDb" id="9606-ENSP00000346577"/>
<dbReference type="PeptideAtlas" id="Q9Y6K8"/>
<dbReference type="ProteomicsDB" id="86713">
    <molecule id="Q9Y6K8-1"/>
</dbReference>
<dbReference type="ProteomicsDB" id="86714">
    <molecule id="Q9Y6K8-2"/>
</dbReference>
<dbReference type="ProteomicsDB" id="86715">
    <molecule id="Q9Y6K8-3"/>
</dbReference>
<dbReference type="Pumba" id="Q9Y6K8"/>
<dbReference type="Antibodypedia" id="19726">
    <property type="antibodies" value="388 antibodies from 28 providers"/>
</dbReference>
<dbReference type="DNASU" id="26289"/>
<dbReference type="Ensembl" id="ENST00000344720.9">
    <molecule id="Q9Y6K8-3"/>
    <property type="protein sequence ID" value="ENSP00000341430.5"/>
    <property type="gene ID" value="ENSG00000154027.19"/>
</dbReference>
<dbReference type="Ensembl" id="ENST00000354567.7">
    <molecule id="Q9Y6K8-1"/>
    <property type="protein sequence ID" value="ENSP00000346577.2"/>
    <property type="gene ID" value="ENSG00000154027.19"/>
</dbReference>
<dbReference type="GeneID" id="26289"/>
<dbReference type="KEGG" id="hsa:26289"/>
<dbReference type="MANE-Select" id="ENST00000354567.7">
    <property type="protein sequence ID" value="ENSP00000346577.2"/>
    <property type="RefSeq nucleotide sequence ID" value="NM_174858.3"/>
    <property type="RefSeq protein sequence ID" value="NP_777283.1"/>
</dbReference>
<dbReference type="UCSC" id="uc001dhn.4">
    <molecule id="Q9Y6K8-1"/>
    <property type="organism name" value="human"/>
</dbReference>
<dbReference type="AGR" id="HGNC:365"/>
<dbReference type="CTD" id="26289"/>
<dbReference type="DisGeNET" id="26289"/>
<dbReference type="GeneCards" id="AK5"/>
<dbReference type="HGNC" id="HGNC:365">
    <property type="gene designation" value="AK5"/>
</dbReference>
<dbReference type="HPA" id="ENSG00000154027">
    <property type="expression patterns" value="Tissue enriched (brain)"/>
</dbReference>
<dbReference type="MIM" id="608009">
    <property type="type" value="gene"/>
</dbReference>
<dbReference type="neXtProt" id="NX_Q9Y6K8"/>
<dbReference type="OpenTargets" id="ENSG00000154027"/>
<dbReference type="PharmGKB" id="PA24659"/>
<dbReference type="VEuPathDB" id="HostDB:ENSG00000154027"/>
<dbReference type="eggNOG" id="KOG3079">
    <property type="taxonomic scope" value="Eukaryota"/>
</dbReference>
<dbReference type="GeneTree" id="ENSGT00940000155917"/>
<dbReference type="HOGENOM" id="CLU_034712_1_0_1"/>
<dbReference type="InParanoid" id="Q9Y6K8"/>
<dbReference type="OMA" id="ETHIVHQ"/>
<dbReference type="OrthoDB" id="6436361at2759"/>
<dbReference type="PAN-GO" id="Q9Y6K8">
    <property type="GO annotations" value="5 GO annotations based on evolutionary models"/>
</dbReference>
<dbReference type="PhylomeDB" id="Q9Y6K8"/>
<dbReference type="TreeFam" id="TF313747"/>
<dbReference type="BioCyc" id="MetaCyc:HS07943-MONOMER"/>
<dbReference type="BRENDA" id="2.7.4.3">
    <property type="organism ID" value="2681"/>
</dbReference>
<dbReference type="PathwayCommons" id="Q9Y6K8"/>
<dbReference type="Reactome" id="R-HSA-499943">
    <property type="pathway name" value="Interconversion of nucleotide di- and triphosphates"/>
</dbReference>
<dbReference type="SignaLink" id="Q9Y6K8"/>
<dbReference type="BioGRID-ORCS" id="26289">
    <property type="hits" value="11 hits in 1150 CRISPR screens"/>
</dbReference>
<dbReference type="CD-CODE" id="FB4E32DD">
    <property type="entry name" value="Presynaptic clusters and postsynaptic densities"/>
</dbReference>
<dbReference type="ChiTaRS" id="AK5">
    <property type="organism name" value="human"/>
</dbReference>
<dbReference type="EvolutionaryTrace" id="Q9Y6K8"/>
<dbReference type="GenomeRNAi" id="26289"/>
<dbReference type="Pharos" id="Q9Y6K8">
    <property type="development level" value="Tbio"/>
</dbReference>
<dbReference type="PRO" id="PR:Q9Y6K8"/>
<dbReference type="Proteomes" id="UP000005640">
    <property type="component" value="Chromosome 1"/>
</dbReference>
<dbReference type="RNAct" id="Q9Y6K8">
    <property type="molecule type" value="protein"/>
</dbReference>
<dbReference type="Bgee" id="ENSG00000154027">
    <property type="expression patterns" value="Expressed in middle temporal gyrus and 131 other cell types or tissues"/>
</dbReference>
<dbReference type="ExpressionAtlas" id="Q9Y6K8">
    <property type="expression patterns" value="baseline and differential"/>
</dbReference>
<dbReference type="GO" id="GO:0034451">
    <property type="term" value="C:centriolar satellite"/>
    <property type="evidence" value="ECO:0000314"/>
    <property type="project" value="HPA"/>
</dbReference>
<dbReference type="GO" id="GO:0005737">
    <property type="term" value="C:cytoplasm"/>
    <property type="evidence" value="ECO:0000318"/>
    <property type="project" value="GO_Central"/>
</dbReference>
<dbReference type="GO" id="GO:0005829">
    <property type="term" value="C:cytosol"/>
    <property type="evidence" value="ECO:0000314"/>
    <property type="project" value="HPA"/>
</dbReference>
<dbReference type="GO" id="GO:0004017">
    <property type="term" value="F:adenylate kinase activity"/>
    <property type="evidence" value="ECO:0000304"/>
    <property type="project" value="ProtInc"/>
</dbReference>
<dbReference type="GO" id="GO:0005524">
    <property type="term" value="F:ATP binding"/>
    <property type="evidence" value="ECO:0007669"/>
    <property type="project" value="UniProtKB-KW"/>
</dbReference>
<dbReference type="GO" id="GO:0004550">
    <property type="term" value="F:nucleoside diphosphate kinase activity"/>
    <property type="evidence" value="ECO:0000314"/>
    <property type="project" value="UniProtKB"/>
</dbReference>
<dbReference type="GO" id="GO:0006172">
    <property type="term" value="P:ADP biosynthetic process"/>
    <property type="evidence" value="ECO:0000304"/>
    <property type="project" value="ProtInc"/>
</dbReference>
<dbReference type="GO" id="GO:0046034">
    <property type="term" value="P:ATP metabolic process"/>
    <property type="evidence" value="ECO:0007669"/>
    <property type="project" value="InterPro"/>
</dbReference>
<dbReference type="GO" id="GO:0006173">
    <property type="term" value="P:dADP biosynthetic process"/>
    <property type="evidence" value="ECO:0000304"/>
    <property type="project" value="ProtInc"/>
</dbReference>
<dbReference type="GO" id="GO:0009220">
    <property type="term" value="P:pyrimidine ribonucleotide biosynthetic process"/>
    <property type="evidence" value="ECO:0000304"/>
    <property type="project" value="ProtInc"/>
</dbReference>
<dbReference type="CDD" id="cd01428">
    <property type="entry name" value="ADK"/>
    <property type="match status" value="2"/>
</dbReference>
<dbReference type="CDD" id="cd22978">
    <property type="entry name" value="DD_AK5"/>
    <property type="match status" value="1"/>
</dbReference>
<dbReference type="FunFam" id="3.40.50.300:FF:000583">
    <property type="entry name" value="Adenylate kinase isoenzyme 5"/>
    <property type="match status" value="1"/>
</dbReference>
<dbReference type="FunFam" id="3.40.50.300:FF:001176">
    <property type="entry name" value="Adenylate kinase isoenzyme 5"/>
    <property type="match status" value="1"/>
</dbReference>
<dbReference type="Gene3D" id="3.40.50.300">
    <property type="entry name" value="P-loop containing nucleotide triphosphate hydrolases"/>
    <property type="match status" value="2"/>
</dbReference>
<dbReference type="HAMAP" id="MF_00235">
    <property type="entry name" value="Adenylate_kinase_Adk"/>
    <property type="match status" value="2"/>
</dbReference>
<dbReference type="InterPro" id="IPR000850">
    <property type="entry name" value="Adenylat/UMP-CMP_kin"/>
</dbReference>
<dbReference type="InterPro" id="IPR033690">
    <property type="entry name" value="Adenylat_kinase_CS"/>
</dbReference>
<dbReference type="InterPro" id="IPR006267">
    <property type="entry name" value="AK1/5"/>
</dbReference>
<dbReference type="InterPro" id="IPR027417">
    <property type="entry name" value="P-loop_NTPase"/>
</dbReference>
<dbReference type="NCBIfam" id="TIGR01360">
    <property type="entry name" value="aden_kin_iso1"/>
    <property type="match status" value="1"/>
</dbReference>
<dbReference type="PANTHER" id="PTHR23359">
    <property type="entry name" value="NUCLEOTIDE KINASE"/>
    <property type="match status" value="1"/>
</dbReference>
<dbReference type="Pfam" id="PF00406">
    <property type="entry name" value="ADK"/>
    <property type="match status" value="2"/>
</dbReference>
<dbReference type="PRINTS" id="PR00094">
    <property type="entry name" value="ADENYLTKNASE"/>
</dbReference>
<dbReference type="SUPFAM" id="SSF47391">
    <property type="entry name" value="Dimerization-anchoring domain of cAMP-dependent PK regulatory subunit"/>
    <property type="match status" value="1"/>
</dbReference>
<dbReference type="SUPFAM" id="SSF52540">
    <property type="entry name" value="P-loop containing nucleoside triphosphate hydrolases"/>
    <property type="match status" value="2"/>
</dbReference>
<dbReference type="PROSITE" id="PS00113">
    <property type="entry name" value="ADENYLATE_KINASE"/>
    <property type="match status" value="2"/>
</dbReference>
<reference key="1">
    <citation type="journal article" date="1999" name="Eur. J. Biochem.">
        <title>Identification of a novel human adenylate kinase. cDNA cloning, expression analysis, chromosome localization and characterization of the recombinant protein.</title>
        <authorList>
            <person name="Van Rompay A.R."/>
            <person name="Johansson M."/>
            <person name="Karlsson A."/>
        </authorList>
    </citation>
    <scope>NUCLEOTIDE SEQUENCE [MRNA] (ISOFORM 2)</scope>
    <scope>TISSUE SPECIFICITY</scope>
</reference>
<reference key="2">
    <citation type="submission" date="2002-11" db="EMBL/GenBank/DDBJ databases">
        <title>Cloning and characterization of a novel human gene, adenylate kinase 6.</title>
        <authorList>
            <person name="Li J."/>
            <person name="Ji C."/>
            <person name="Xie Y."/>
            <person name="Mao Y."/>
        </authorList>
    </citation>
    <scope>NUCLEOTIDE SEQUENCE [MRNA] (ISOFORM 3)</scope>
</reference>
<reference key="3">
    <citation type="submission" date="2001-11" db="EMBL/GenBank/DDBJ databases">
        <authorList>
            <person name="Guo J.H."/>
            <person name="Yu L."/>
            <person name="Li D."/>
        </authorList>
    </citation>
    <scope>NUCLEOTIDE SEQUENCE [LARGE SCALE MRNA] (ISOFORM 1)</scope>
    <source>
        <tissue>Brain</tissue>
    </source>
</reference>
<reference key="4">
    <citation type="submission" date="2004-06" db="EMBL/GenBank/DDBJ databases">
        <title>Cloning of human full open reading frames in Gateway(TM) system entry vector (pDONR201).</title>
        <authorList>
            <person name="Ebert L."/>
            <person name="Schick M."/>
            <person name="Neubert P."/>
            <person name="Schatten R."/>
            <person name="Henze S."/>
            <person name="Korn B."/>
        </authorList>
    </citation>
    <scope>NUCLEOTIDE SEQUENCE [LARGE SCALE MRNA] (ISOFORM 2)</scope>
</reference>
<reference key="5">
    <citation type="journal article" date="2004" name="Genome Res.">
        <title>The status, quality, and expansion of the NIH full-length cDNA project: the Mammalian Gene Collection (MGC).</title>
        <authorList>
            <consortium name="The MGC Project Team"/>
        </authorList>
    </citation>
    <scope>NUCLEOTIDE SEQUENCE [LARGE SCALE MRNA] (ISOFORMS 1; 2 AND 3)</scope>
    <source>
        <tissue>Brain</tissue>
        <tissue>Liver</tissue>
    </source>
</reference>
<reference key="6">
    <citation type="journal article" date="2006" name="Mol. Cell. Proteomics">
        <title>Transgenic mouse proteomics identifies new 14-3-3-associated proteins involved in cytoskeletal rearrangements and cell signaling.</title>
        <authorList>
            <person name="Angrand P.O."/>
            <person name="Segura I."/>
            <person name="Voelkel P."/>
            <person name="Ghidelli S."/>
            <person name="Terry R."/>
            <person name="Brajenovic M."/>
            <person name="Vintersten K."/>
            <person name="Klein R."/>
            <person name="Superti-Furga G."/>
            <person name="Drewes G."/>
            <person name="Kuster B."/>
            <person name="Bouwmeester T."/>
            <person name="Acker-Palmer A."/>
        </authorList>
    </citation>
    <scope>INTERACTION WITH YWHAZ</scope>
</reference>
<reference key="7">
    <citation type="journal article" date="2009" name="FEBS Lett.">
        <title>Identification of two active functional domains of human adenylate kinase 5.</title>
        <authorList>
            <person name="Solaroli N."/>
            <person name="Panayiotou C."/>
            <person name="Johansson M."/>
            <person name="Karlsson A."/>
        </authorList>
    </citation>
    <scope>FUNCTION</scope>
    <scope>CATALYTIC ACTIVITY</scope>
    <scope>SUBCELLULAR LOCATION</scope>
</reference>
<reference key="8">
    <citation type="journal article" date="2013" name="Int. J. Biochem. Cell Biol.">
        <title>The human adenylate kinase 9 is a nucleoside mono- and diphosphate kinase.</title>
        <authorList>
            <person name="Amiri M."/>
            <person name="Conserva F."/>
            <person name="Panayiotou C."/>
            <person name="Karlsson A."/>
            <person name="Solaroli N."/>
        </authorList>
    </citation>
    <scope>FUNCTION</scope>
    <scope>CATALYTIC ACTIVITY</scope>
</reference>
<reference key="9">
    <citation type="submission" date="2005-07" db="PDB data bank">
        <title>Crystal structure of adenylate kinase 5.</title>
        <authorList>
            <consortium name="Structural genomics consortium (SGC)"/>
        </authorList>
    </citation>
    <scope>X-RAY CRYSTALLOGRAPHY (2.3 ANGSTROMS) OF 366-562 IN COMPLEX WITH AMP</scope>
</reference>
<keyword id="KW-0002">3D-structure</keyword>
<keyword id="KW-0025">Alternative splicing</keyword>
<keyword id="KW-0067">ATP-binding</keyword>
<keyword id="KW-0963">Cytoplasm</keyword>
<keyword id="KW-0418">Kinase</keyword>
<keyword id="KW-0547">Nucleotide-binding</keyword>
<keyword id="KW-1267">Proteomics identification</keyword>
<keyword id="KW-1185">Reference proteome</keyword>
<keyword id="KW-0808">Transferase</keyword>
<accession>Q9Y6K8</accession>
<accession>Q5U622</accession>
<accession>Q6FH66</accession>
<accession>Q7Z4T5</accession>
<accession>Q86YS0</accession>
<accession>Q8N464</accession>
<accession>Q96EC9</accession>
<organism>
    <name type="scientific">Homo sapiens</name>
    <name type="common">Human</name>
    <dbReference type="NCBI Taxonomy" id="9606"/>
    <lineage>
        <taxon>Eukaryota</taxon>
        <taxon>Metazoa</taxon>
        <taxon>Chordata</taxon>
        <taxon>Craniata</taxon>
        <taxon>Vertebrata</taxon>
        <taxon>Euteleostomi</taxon>
        <taxon>Mammalia</taxon>
        <taxon>Eutheria</taxon>
        <taxon>Euarchontoglires</taxon>
        <taxon>Primates</taxon>
        <taxon>Haplorrhini</taxon>
        <taxon>Catarrhini</taxon>
        <taxon>Hominidae</taxon>
        <taxon>Homo</taxon>
    </lineage>
</organism>